<comment type="function">
    <text evidence="2">Beta toxins bind at site-4 of sodium channels and shift the voltage of activation toward more negative potentials thereby affecting sodium channel activation and promoting spontaneous and repetitive firing. This toxin is active against mammals and lethal to mice. Selectively modulates Nav1.4/SCN4A, a sodium channel present in both denervated and innervated skeletal muscle.</text>
</comment>
<comment type="subcellular location">
    <subcellularLocation>
        <location>Secreted</location>
    </subcellularLocation>
</comment>
<comment type="tissue specificity">
    <text>Expressed by the venom gland.</text>
</comment>
<comment type="domain">
    <text evidence="5">Has the structural arrangement of an alpha-helix connected to antiparallel beta-sheets by disulfide bonds (CS-alpha/beta).</text>
</comment>
<comment type="mass spectrometry" mass="7590.0" method="Unknown" evidence="2"/>
<comment type="miscellaneous">
    <text evidence="3">Is neutralized by the single-chain antibody fragment 10FG2.</text>
</comment>
<comment type="similarity">
    <text evidence="5">Belongs to the long (4 C-C) scorpion toxin superfamily. Sodium channel inhibitor family. Beta subfamily.</text>
</comment>
<feature type="chain" id="PRO_0000398150" description="Beta-mammal toxin CeII9">
    <location>
        <begin position="1"/>
        <end position="67"/>
    </location>
</feature>
<feature type="domain" description="LCN-type CS-alpha/beta" evidence="1">
    <location>
        <begin position="1"/>
        <end position="66"/>
    </location>
</feature>
<feature type="disulfide bond" evidence="1">
    <location>
        <begin position="12"/>
        <end position="65"/>
    </location>
</feature>
<feature type="disulfide bond" evidence="1">
    <location>
        <begin position="16"/>
        <end position="41"/>
    </location>
</feature>
<feature type="disulfide bond" evidence="1">
    <location>
        <begin position="25"/>
        <end position="46"/>
    </location>
</feature>
<feature type="disulfide bond" evidence="1">
    <location>
        <begin position="29"/>
        <end position="48"/>
    </location>
</feature>
<evidence type="ECO:0000255" key="1">
    <source>
        <dbReference type="PROSITE-ProRule" id="PRU01210"/>
    </source>
</evidence>
<evidence type="ECO:0000269" key="2">
    <source>
    </source>
</evidence>
<evidence type="ECO:0000269" key="3">
    <source>
    </source>
</evidence>
<evidence type="ECO:0000303" key="4">
    <source>
    </source>
</evidence>
<evidence type="ECO:0000305" key="5"/>
<reference key="1">
    <citation type="journal article" date="2010" name="Toxicon">
        <title>Isolation and characterization of two novel scorpion toxins: The alpha-toxin-like CeII8, specific for Na(v)1.7 channels and the classical anti-mammalian CeII9, specific for Na(v)1.4 channels.</title>
        <authorList>
            <person name="Vandendriessche T."/>
            <person name="Olamendi-Portugal T."/>
            <person name="Zamudio F.Z."/>
            <person name="Possani L.D."/>
            <person name="Tytgat J."/>
        </authorList>
    </citation>
    <scope>PROTEIN SEQUENCE</scope>
    <scope>MASS SPECTROMETRY</scope>
    <scope>FUNCTION</scope>
    <source>
        <tissue>Venom</tissue>
    </source>
</reference>
<reference key="2">
    <citation type="journal article" date="2019" name="Toxins">
        <title>Generation of a broadly cross-neutralizing antibody fragment against several mexican scorpion venoms.</title>
        <authorList>
            <person name="Riano-Umbarila L."/>
            <person name="Gomez-Ramirez I.V."/>
            <person name="Ledezma-Candanoza L.M."/>
            <person name="Olamendi-Portugal T."/>
            <person name="Rodriguez-Rodriguez E.R."/>
            <person name="Fernandez-Taboada G."/>
            <person name="Possani L.D."/>
            <person name="Becerril B."/>
        </authorList>
    </citation>
    <scope>NEUTRALIZATION BY ANTIBODY</scope>
</reference>
<protein>
    <recommendedName>
        <fullName evidence="4">Beta-mammal toxin CeII9</fullName>
    </recommendedName>
    <alternativeName>
        <fullName evidence="5">Cell9</fullName>
    </alternativeName>
</protein>
<dbReference type="SMR" id="P0CH41"/>
<dbReference type="GO" id="GO:0005576">
    <property type="term" value="C:extracellular region"/>
    <property type="evidence" value="ECO:0007669"/>
    <property type="project" value="UniProtKB-SubCell"/>
</dbReference>
<dbReference type="GO" id="GO:0019871">
    <property type="term" value="F:sodium channel inhibitor activity"/>
    <property type="evidence" value="ECO:0007669"/>
    <property type="project" value="InterPro"/>
</dbReference>
<dbReference type="GO" id="GO:0090729">
    <property type="term" value="F:toxin activity"/>
    <property type="evidence" value="ECO:0007669"/>
    <property type="project" value="UniProtKB-KW"/>
</dbReference>
<dbReference type="GO" id="GO:0006952">
    <property type="term" value="P:defense response"/>
    <property type="evidence" value="ECO:0007669"/>
    <property type="project" value="InterPro"/>
</dbReference>
<dbReference type="CDD" id="cd23106">
    <property type="entry name" value="neurotoxins_LC_scorpion"/>
    <property type="match status" value="1"/>
</dbReference>
<dbReference type="FunFam" id="3.30.30.10:FF:000002">
    <property type="entry name" value="Alpha-like toxin BmK-M1"/>
    <property type="match status" value="1"/>
</dbReference>
<dbReference type="Gene3D" id="3.30.30.10">
    <property type="entry name" value="Knottin, scorpion toxin-like"/>
    <property type="match status" value="1"/>
</dbReference>
<dbReference type="InterPro" id="IPR044062">
    <property type="entry name" value="LCN-type_CS_alpha_beta_dom"/>
</dbReference>
<dbReference type="InterPro" id="IPR003614">
    <property type="entry name" value="Scorpion_toxin-like"/>
</dbReference>
<dbReference type="InterPro" id="IPR036574">
    <property type="entry name" value="Scorpion_toxin-like_sf"/>
</dbReference>
<dbReference type="InterPro" id="IPR018218">
    <property type="entry name" value="Scorpion_toxinL"/>
</dbReference>
<dbReference type="PRINTS" id="PR00285">
    <property type="entry name" value="SCORPNTOXIN"/>
</dbReference>
<dbReference type="SMART" id="SM00505">
    <property type="entry name" value="Knot1"/>
    <property type="match status" value="1"/>
</dbReference>
<dbReference type="SUPFAM" id="SSF57095">
    <property type="entry name" value="Scorpion toxin-like"/>
    <property type="match status" value="1"/>
</dbReference>
<dbReference type="PROSITE" id="PS51863">
    <property type="entry name" value="LCN_CSAB"/>
    <property type="match status" value="1"/>
</dbReference>
<name>CEII9_CENEL</name>
<accession>P0CH41</accession>
<sequence length="67" mass="7599">KEGYLVNHSTGCKYECFKLGDNDYCLRECRQGYGKGAGGYCYAFGCWCTHLYEQAVVWPLPKKTCNA</sequence>
<keyword id="KW-0903">Direct protein sequencing</keyword>
<keyword id="KW-1015">Disulfide bond</keyword>
<keyword id="KW-0872">Ion channel impairing toxin</keyword>
<keyword id="KW-0528">Neurotoxin</keyword>
<keyword id="KW-0964">Secreted</keyword>
<keyword id="KW-0800">Toxin</keyword>
<keyword id="KW-0738">Voltage-gated sodium channel impairing toxin</keyword>
<proteinExistence type="evidence at protein level"/>
<organism>
    <name type="scientific">Centruroides elegans</name>
    <name type="common">Bark scorpion</name>
    <dbReference type="NCBI Taxonomy" id="217897"/>
    <lineage>
        <taxon>Eukaryota</taxon>
        <taxon>Metazoa</taxon>
        <taxon>Ecdysozoa</taxon>
        <taxon>Arthropoda</taxon>
        <taxon>Chelicerata</taxon>
        <taxon>Arachnida</taxon>
        <taxon>Scorpiones</taxon>
        <taxon>Buthida</taxon>
        <taxon>Buthoidea</taxon>
        <taxon>Buthidae</taxon>
        <taxon>Centruroides</taxon>
    </lineage>
</organism>